<feature type="chain" id="PRO_0000270409" description="Methionine import ATP-binding protein MetN">
    <location>
        <begin position="1"/>
        <end position="341"/>
    </location>
</feature>
<feature type="domain" description="ABC transporter" evidence="1">
    <location>
        <begin position="2"/>
        <end position="241"/>
    </location>
</feature>
<feature type="binding site" evidence="1">
    <location>
        <begin position="38"/>
        <end position="45"/>
    </location>
    <ligand>
        <name>ATP</name>
        <dbReference type="ChEBI" id="CHEBI:30616"/>
    </ligand>
</feature>
<gene>
    <name evidence="1" type="primary">metN</name>
    <name type="ordered locus">SH2047</name>
</gene>
<accession>Q4L4R9</accession>
<evidence type="ECO:0000255" key="1">
    <source>
        <dbReference type="HAMAP-Rule" id="MF_01719"/>
    </source>
</evidence>
<organism>
    <name type="scientific">Staphylococcus haemolyticus (strain JCSC1435)</name>
    <dbReference type="NCBI Taxonomy" id="279808"/>
    <lineage>
        <taxon>Bacteria</taxon>
        <taxon>Bacillati</taxon>
        <taxon>Bacillota</taxon>
        <taxon>Bacilli</taxon>
        <taxon>Bacillales</taxon>
        <taxon>Staphylococcaceae</taxon>
        <taxon>Staphylococcus</taxon>
    </lineage>
</organism>
<protein>
    <recommendedName>
        <fullName evidence="1">Methionine import ATP-binding protein MetN</fullName>
        <ecNumber evidence="1">7.4.2.11</ecNumber>
    </recommendedName>
</protein>
<sequence length="341" mass="38457">MIELNQVVKRYHTKDKDVLAVDNVNLNIETGSIFGVIGFSGAGKSTLIRMFNNLEEPTSGDIIIDGDNINKLSKAELRRKRQKVSMVFQHFNLLWSRTVLRNITFPLEIAGYSKTKANERAKELIDLVGLNGRENAYPSELSGGQKQRVGIARALANEPDVLLCDEATSALDPQTTDEILDLLLKIKERENLTIVIITHEMHVIRRVCDEVAVMESGRVIEQGKVTQVFENPQHEVTRRFVKDDLDDDFEESIKHLEPLDSDAYIVRLNFNGGNTTEPVVSYISKTHNIDINILEANIKNTRGGSVGFLVVHIPHIAETEFETFKEDLHQQHVNVEVVKHG</sequence>
<name>METN_STAHJ</name>
<keyword id="KW-0029">Amino-acid transport</keyword>
<keyword id="KW-0067">ATP-binding</keyword>
<keyword id="KW-1003">Cell membrane</keyword>
<keyword id="KW-0472">Membrane</keyword>
<keyword id="KW-0547">Nucleotide-binding</keyword>
<keyword id="KW-1278">Translocase</keyword>
<keyword id="KW-0813">Transport</keyword>
<dbReference type="EC" id="7.4.2.11" evidence="1"/>
<dbReference type="EMBL" id="AP006716">
    <property type="protein sequence ID" value="BAE05356.1"/>
    <property type="molecule type" value="Genomic_DNA"/>
</dbReference>
<dbReference type="RefSeq" id="WP_011276311.1">
    <property type="nucleotide sequence ID" value="NC_007168.1"/>
</dbReference>
<dbReference type="SMR" id="Q4L4R9"/>
<dbReference type="KEGG" id="sha:SH2047"/>
<dbReference type="eggNOG" id="COG1135">
    <property type="taxonomic scope" value="Bacteria"/>
</dbReference>
<dbReference type="HOGENOM" id="CLU_000604_1_3_9"/>
<dbReference type="OrthoDB" id="9802264at2"/>
<dbReference type="Proteomes" id="UP000000543">
    <property type="component" value="Chromosome"/>
</dbReference>
<dbReference type="GO" id="GO:0005886">
    <property type="term" value="C:plasma membrane"/>
    <property type="evidence" value="ECO:0007669"/>
    <property type="project" value="UniProtKB-SubCell"/>
</dbReference>
<dbReference type="GO" id="GO:0033232">
    <property type="term" value="F:ABC-type D-methionine transporter activity"/>
    <property type="evidence" value="ECO:0007669"/>
    <property type="project" value="UniProtKB-EC"/>
</dbReference>
<dbReference type="GO" id="GO:0005524">
    <property type="term" value="F:ATP binding"/>
    <property type="evidence" value="ECO:0007669"/>
    <property type="project" value="UniProtKB-KW"/>
</dbReference>
<dbReference type="GO" id="GO:0016887">
    <property type="term" value="F:ATP hydrolysis activity"/>
    <property type="evidence" value="ECO:0007669"/>
    <property type="project" value="InterPro"/>
</dbReference>
<dbReference type="CDD" id="cd03258">
    <property type="entry name" value="ABC_MetN_methionine_transporter"/>
    <property type="match status" value="1"/>
</dbReference>
<dbReference type="FunFam" id="3.40.50.300:FF:000056">
    <property type="entry name" value="Cell division ATP-binding protein FtsE"/>
    <property type="match status" value="1"/>
</dbReference>
<dbReference type="Gene3D" id="3.30.70.260">
    <property type="match status" value="1"/>
</dbReference>
<dbReference type="Gene3D" id="3.40.50.300">
    <property type="entry name" value="P-loop containing nucleotide triphosphate hydrolases"/>
    <property type="match status" value="1"/>
</dbReference>
<dbReference type="InterPro" id="IPR003593">
    <property type="entry name" value="AAA+_ATPase"/>
</dbReference>
<dbReference type="InterPro" id="IPR003439">
    <property type="entry name" value="ABC_transporter-like_ATP-bd"/>
</dbReference>
<dbReference type="InterPro" id="IPR017871">
    <property type="entry name" value="ABC_transporter-like_CS"/>
</dbReference>
<dbReference type="InterPro" id="IPR045865">
    <property type="entry name" value="ACT-like_dom_sf"/>
</dbReference>
<dbReference type="InterPro" id="IPR041701">
    <property type="entry name" value="MetN_ABC"/>
</dbReference>
<dbReference type="InterPro" id="IPR050086">
    <property type="entry name" value="MetN_ABC_transporter-like"/>
</dbReference>
<dbReference type="InterPro" id="IPR018449">
    <property type="entry name" value="NIL_domain"/>
</dbReference>
<dbReference type="InterPro" id="IPR027417">
    <property type="entry name" value="P-loop_NTPase"/>
</dbReference>
<dbReference type="PANTHER" id="PTHR43166">
    <property type="entry name" value="AMINO ACID IMPORT ATP-BINDING PROTEIN"/>
    <property type="match status" value="1"/>
</dbReference>
<dbReference type="PANTHER" id="PTHR43166:SF36">
    <property type="entry name" value="METHIONINE IMPORT ATP-BINDING PROTEIN METN 2"/>
    <property type="match status" value="1"/>
</dbReference>
<dbReference type="Pfam" id="PF00005">
    <property type="entry name" value="ABC_tran"/>
    <property type="match status" value="1"/>
</dbReference>
<dbReference type="Pfam" id="PF09383">
    <property type="entry name" value="NIL"/>
    <property type="match status" value="1"/>
</dbReference>
<dbReference type="SMART" id="SM00382">
    <property type="entry name" value="AAA"/>
    <property type="match status" value="1"/>
</dbReference>
<dbReference type="SMART" id="SM00930">
    <property type="entry name" value="NIL"/>
    <property type="match status" value="1"/>
</dbReference>
<dbReference type="SUPFAM" id="SSF55021">
    <property type="entry name" value="ACT-like"/>
    <property type="match status" value="1"/>
</dbReference>
<dbReference type="SUPFAM" id="SSF52540">
    <property type="entry name" value="P-loop containing nucleoside triphosphate hydrolases"/>
    <property type="match status" value="1"/>
</dbReference>
<dbReference type="PROSITE" id="PS00211">
    <property type="entry name" value="ABC_TRANSPORTER_1"/>
    <property type="match status" value="1"/>
</dbReference>
<dbReference type="PROSITE" id="PS50893">
    <property type="entry name" value="ABC_TRANSPORTER_2"/>
    <property type="match status" value="1"/>
</dbReference>
<dbReference type="PROSITE" id="PS51264">
    <property type="entry name" value="METN"/>
    <property type="match status" value="1"/>
</dbReference>
<reference key="1">
    <citation type="journal article" date="2005" name="J. Bacteriol.">
        <title>Whole-genome sequencing of Staphylococcus haemolyticus uncovers the extreme plasticity of its genome and the evolution of human-colonizing staphylococcal species.</title>
        <authorList>
            <person name="Takeuchi F."/>
            <person name="Watanabe S."/>
            <person name="Baba T."/>
            <person name="Yuzawa H."/>
            <person name="Ito T."/>
            <person name="Morimoto Y."/>
            <person name="Kuroda M."/>
            <person name="Cui L."/>
            <person name="Takahashi M."/>
            <person name="Ankai A."/>
            <person name="Baba S."/>
            <person name="Fukui S."/>
            <person name="Lee J.C."/>
            <person name="Hiramatsu K."/>
        </authorList>
    </citation>
    <scope>NUCLEOTIDE SEQUENCE [LARGE SCALE GENOMIC DNA]</scope>
    <source>
        <strain>JCSC1435</strain>
    </source>
</reference>
<comment type="function">
    <text evidence="1">Part of the ABC transporter complex MetNIQ involved in methionine import. Responsible for energy coupling to the transport system.</text>
</comment>
<comment type="catalytic activity">
    <reaction evidence="1">
        <text>L-methionine(out) + ATP + H2O = L-methionine(in) + ADP + phosphate + H(+)</text>
        <dbReference type="Rhea" id="RHEA:29779"/>
        <dbReference type="ChEBI" id="CHEBI:15377"/>
        <dbReference type="ChEBI" id="CHEBI:15378"/>
        <dbReference type="ChEBI" id="CHEBI:30616"/>
        <dbReference type="ChEBI" id="CHEBI:43474"/>
        <dbReference type="ChEBI" id="CHEBI:57844"/>
        <dbReference type="ChEBI" id="CHEBI:456216"/>
        <dbReference type="EC" id="7.4.2.11"/>
    </reaction>
</comment>
<comment type="catalytic activity">
    <reaction evidence="1">
        <text>D-methionine(out) + ATP + H2O = D-methionine(in) + ADP + phosphate + H(+)</text>
        <dbReference type="Rhea" id="RHEA:29767"/>
        <dbReference type="ChEBI" id="CHEBI:15377"/>
        <dbReference type="ChEBI" id="CHEBI:15378"/>
        <dbReference type="ChEBI" id="CHEBI:30616"/>
        <dbReference type="ChEBI" id="CHEBI:43474"/>
        <dbReference type="ChEBI" id="CHEBI:57932"/>
        <dbReference type="ChEBI" id="CHEBI:456216"/>
        <dbReference type="EC" id="7.4.2.11"/>
    </reaction>
</comment>
<comment type="subunit">
    <text evidence="1">The complex is composed of two ATP-binding proteins (MetN), two transmembrane proteins (MetI) and a solute-binding protein (MetQ).</text>
</comment>
<comment type="subcellular location">
    <subcellularLocation>
        <location evidence="1">Cell membrane</location>
        <topology evidence="1">Peripheral membrane protein</topology>
    </subcellularLocation>
</comment>
<comment type="similarity">
    <text evidence="1">Belongs to the ABC transporter superfamily. Methionine importer (TC 3.A.1.24) family.</text>
</comment>
<proteinExistence type="inferred from homology"/>